<dbReference type="EMBL" id="AF352731">
    <property type="protein sequence ID" value="AAK18622.1"/>
    <property type="molecule type" value="Genomic_DNA"/>
</dbReference>
<dbReference type="EMBL" id="AF323084">
    <property type="protein sequence ID" value="AAG59827.1"/>
    <property type="molecule type" value="mRNA"/>
</dbReference>
<dbReference type="EMBL" id="AF290873">
    <property type="protein sequence ID" value="AAK83105.1"/>
    <property type="molecule type" value="mRNA"/>
</dbReference>
<dbReference type="EMBL" id="AF323921">
    <property type="protein sequence ID" value="AAL96378.1"/>
    <property type="molecule type" value="mRNA"/>
</dbReference>
<dbReference type="EMBL" id="AY358655">
    <property type="protein sequence ID" value="AAQ89018.1"/>
    <property type="molecule type" value="mRNA"/>
</dbReference>
<dbReference type="EMBL" id="BC069318">
    <property type="protein sequence ID" value="AAH69318.1"/>
    <property type="molecule type" value="mRNA"/>
</dbReference>
<dbReference type="EMBL" id="BC113502">
    <property type="protein sequence ID" value="AAI13503.1"/>
    <property type="molecule type" value="mRNA"/>
</dbReference>
<dbReference type="EMBL" id="BC113528">
    <property type="protein sequence ID" value="AAI13529.1"/>
    <property type="molecule type" value="mRNA"/>
</dbReference>
<dbReference type="CCDS" id="CCDS2953.1"/>
<dbReference type="RefSeq" id="NP_115968.1">
    <property type="nucleotide sequence ID" value="NM_032579.3"/>
</dbReference>
<dbReference type="SMR" id="Q9BQ08"/>
<dbReference type="BioGRID" id="124186">
    <property type="interactions" value="22"/>
</dbReference>
<dbReference type="FunCoup" id="Q9BQ08">
    <property type="interactions" value="2"/>
</dbReference>
<dbReference type="IntAct" id="Q9BQ08">
    <property type="interactions" value="15"/>
</dbReference>
<dbReference type="STRING" id="9606.ENSP00000295755"/>
<dbReference type="TCDB" id="9.B.329.1.2">
    <property type="family name" value="the resistin-like molecule (relm) family"/>
</dbReference>
<dbReference type="BioMuta" id="RETNLB"/>
<dbReference type="DMDM" id="18202730"/>
<dbReference type="MassIVE" id="Q9BQ08"/>
<dbReference type="PaxDb" id="9606-ENSP00000295755"/>
<dbReference type="PeptideAtlas" id="Q9BQ08"/>
<dbReference type="Antibodypedia" id="16152">
    <property type="antibodies" value="349 antibodies from 34 providers"/>
</dbReference>
<dbReference type="DNASU" id="84666"/>
<dbReference type="Ensembl" id="ENST00000295755.7">
    <property type="protein sequence ID" value="ENSP00000295755.6"/>
    <property type="gene ID" value="ENSG00000163515.7"/>
</dbReference>
<dbReference type="GeneID" id="84666"/>
<dbReference type="KEGG" id="hsa:84666"/>
<dbReference type="MANE-Select" id="ENST00000295755.7">
    <property type="protein sequence ID" value="ENSP00000295755.6"/>
    <property type="RefSeq nucleotide sequence ID" value="NM_032579.3"/>
    <property type="RefSeq protein sequence ID" value="NP_115968.1"/>
</dbReference>
<dbReference type="UCSC" id="uc003dxh.3">
    <property type="organism name" value="human"/>
</dbReference>
<dbReference type="AGR" id="HGNC:20388"/>
<dbReference type="CTD" id="84666"/>
<dbReference type="DisGeNET" id="84666"/>
<dbReference type="GeneCards" id="RETNLB"/>
<dbReference type="HGNC" id="HGNC:20388">
    <property type="gene designation" value="RETNLB"/>
</dbReference>
<dbReference type="HPA" id="ENSG00000163515">
    <property type="expression patterns" value="Tissue enriched (intestine)"/>
</dbReference>
<dbReference type="MIM" id="605645">
    <property type="type" value="gene"/>
</dbReference>
<dbReference type="neXtProt" id="NX_Q9BQ08"/>
<dbReference type="OpenTargets" id="ENSG00000163515"/>
<dbReference type="PharmGKB" id="PA134906814"/>
<dbReference type="VEuPathDB" id="HostDB:ENSG00000163515"/>
<dbReference type="eggNOG" id="ENOG502RTZZ">
    <property type="taxonomic scope" value="Eukaryota"/>
</dbReference>
<dbReference type="GeneTree" id="ENSGT00390000016177"/>
<dbReference type="HOGENOM" id="CLU_150117_0_0_1"/>
<dbReference type="InParanoid" id="Q9BQ08"/>
<dbReference type="OMA" id="QGETTCH"/>
<dbReference type="OrthoDB" id="10065422at2759"/>
<dbReference type="PAN-GO" id="Q9BQ08">
    <property type="GO annotations" value="1 GO annotation based on evolutionary models"/>
</dbReference>
<dbReference type="PhylomeDB" id="Q9BQ08"/>
<dbReference type="TreeFam" id="TF337024"/>
<dbReference type="PathwayCommons" id="Q9BQ08"/>
<dbReference type="BioGRID-ORCS" id="84666">
    <property type="hits" value="15 hits in 1140 CRISPR screens"/>
</dbReference>
<dbReference type="ChiTaRS" id="RETNLB">
    <property type="organism name" value="human"/>
</dbReference>
<dbReference type="GeneWiki" id="RETNLB"/>
<dbReference type="GenomeRNAi" id="84666"/>
<dbReference type="Pharos" id="Q9BQ08">
    <property type="development level" value="Tbio"/>
</dbReference>
<dbReference type="PRO" id="PR:Q9BQ08"/>
<dbReference type="Proteomes" id="UP000005640">
    <property type="component" value="Chromosome 3"/>
</dbReference>
<dbReference type="RNAct" id="Q9BQ08">
    <property type="molecule type" value="protein"/>
</dbReference>
<dbReference type="Bgee" id="ENSG00000163515">
    <property type="expression patterns" value="Expressed in ileal mucosa and 60 other cell types or tissues"/>
</dbReference>
<dbReference type="GO" id="GO:0005615">
    <property type="term" value="C:extracellular space"/>
    <property type="evidence" value="ECO:0000318"/>
    <property type="project" value="GO_Central"/>
</dbReference>
<dbReference type="GO" id="GO:0005179">
    <property type="term" value="F:hormone activity"/>
    <property type="evidence" value="ECO:0007669"/>
    <property type="project" value="UniProtKB-KW"/>
</dbReference>
<dbReference type="GO" id="GO:0050673">
    <property type="term" value="P:epithelial cell proliferation"/>
    <property type="evidence" value="ECO:0000270"/>
    <property type="project" value="UniProtKB"/>
</dbReference>
<dbReference type="CDD" id="cd16333">
    <property type="entry name" value="RELM"/>
    <property type="match status" value="1"/>
</dbReference>
<dbReference type="FunFam" id="2.60.40.4230:FF:000001">
    <property type="entry name" value="Resistin-like beta"/>
    <property type="match status" value="1"/>
</dbReference>
<dbReference type="Gene3D" id="2.60.40.4230">
    <property type="entry name" value="Resistin head domain"/>
    <property type="match status" value="1"/>
</dbReference>
<dbReference type="InterPro" id="IPR009714">
    <property type="entry name" value="RELM"/>
</dbReference>
<dbReference type="InterPro" id="IPR036262">
    <property type="entry name" value="Resistin-like_sf"/>
</dbReference>
<dbReference type="PANTHER" id="PTHR21101">
    <property type="entry name" value="RESISTIN"/>
    <property type="match status" value="1"/>
</dbReference>
<dbReference type="PANTHER" id="PTHR21101:SF13">
    <property type="entry name" value="RESISTIN-LIKE BETA"/>
    <property type="match status" value="1"/>
</dbReference>
<dbReference type="Pfam" id="PF06954">
    <property type="entry name" value="Resistin"/>
    <property type="match status" value="1"/>
</dbReference>
<dbReference type="SUPFAM" id="SSF111423">
    <property type="entry name" value="Resistin"/>
    <property type="match status" value="1"/>
</dbReference>
<name>RETNB_HUMAN</name>
<organism>
    <name type="scientific">Homo sapiens</name>
    <name type="common">Human</name>
    <dbReference type="NCBI Taxonomy" id="9606"/>
    <lineage>
        <taxon>Eukaryota</taxon>
        <taxon>Metazoa</taxon>
        <taxon>Chordata</taxon>
        <taxon>Craniata</taxon>
        <taxon>Vertebrata</taxon>
        <taxon>Euteleostomi</taxon>
        <taxon>Mammalia</taxon>
        <taxon>Eutheria</taxon>
        <taxon>Euarchontoglires</taxon>
        <taxon>Primates</taxon>
        <taxon>Haplorrhini</taxon>
        <taxon>Catarrhini</taxon>
        <taxon>Hominidae</taxon>
        <taxon>Homo</taxon>
    </lineage>
</organism>
<evidence type="ECO:0000250" key="1"/>
<evidence type="ECO:0000255" key="2"/>
<evidence type="ECO:0000305" key="3"/>
<accession>Q9BQ08</accession>
<accession>Q14D27</accession>
<protein>
    <recommendedName>
        <fullName>Resistin-like beta</fullName>
    </recommendedName>
    <alternativeName>
        <fullName>Colon and small intestine-specific cysteine-rich protein</fullName>
    </alternativeName>
    <alternativeName>
        <fullName>Colon carcinoma-related gene protein</fullName>
    </alternativeName>
    <alternativeName>
        <fullName>Cysteine-rich secreted protein A12-alpha-like 1</fullName>
    </alternativeName>
    <alternativeName>
        <fullName>Cysteine-rich secreted protein FIZZ2</fullName>
    </alternativeName>
    <alternativeName>
        <fullName>RELMbeta</fullName>
    </alternativeName>
</protein>
<gene>
    <name type="primary">RETNLB</name>
    <name type="synonym">CCRG</name>
    <name type="synonym">FIZZ2</name>
    <name type="synonym">HXCP2</name>
    <name type="synonym">RETNL2</name>
    <name type="ORF">UNQ408/PRO770</name>
</gene>
<proteinExistence type="evidence at transcript level"/>
<keyword id="KW-1015">Disulfide bond</keyword>
<keyword id="KW-0372">Hormone</keyword>
<keyword id="KW-1185">Reference proteome</keyword>
<keyword id="KW-0964">Secreted</keyword>
<keyword id="KW-0732">Signal</keyword>
<feature type="signal peptide" evidence="2">
    <location>
        <begin position="1"/>
        <end position="23"/>
    </location>
</feature>
<feature type="chain" id="PRO_0000030345" description="Resistin-like beta">
    <location>
        <begin position="24"/>
        <end position="111"/>
    </location>
</feature>
<feature type="disulfide bond" description="Interchain" evidence="3">
    <location>
        <position position="25"/>
    </location>
</feature>
<feature type="disulfide bond" evidence="1">
    <location>
        <begin position="55"/>
        <end position="108"/>
    </location>
</feature>
<feature type="disulfide bond" evidence="1">
    <location>
        <begin position="67"/>
        <end position="107"/>
    </location>
</feature>
<feature type="disulfide bond" evidence="1">
    <location>
        <begin position="76"/>
        <end position="93"/>
    </location>
</feature>
<feature type="disulfide bond" evidence="1">
    <location>
        <begin position="78"/>
        <end position="95"/>
    </location>
</feature>
<feature type="disulfide bond" evidence="1">
    <location>
        <begin position="82"/>
        <end position="97"/>
    </location>
</feature>
<feature type="sequence variant" id="VAR_051791" description="In dbSNP:rs11708527.">
    <original>P</original>
    <variation>L</variation>
    <location>
        <position position="20"/>
    </location>
</feature>
<reference key="1">
    <citation type="journal article" date="2000" name="Blood">
        <title>Representational difference analysis using myeloid cells from C/EBP epsilon deletional mice.</title>
        <authorList>
            <person name="Kubota T."/>
            <person name="Kawano S."/>
            <person name="Chih D.Y."/>
            <person name="Hisatake Y."/>
            <person name="Chumakov A.M."/>
            <person name="Taguchi H."/>
            <person name="Koeffler H.P."/>
        </authorList>
    </citation>
    <scope>NUCLEOTIDE SEQUENCE [GENOMIC DNA]</scope>
</reference>
<reference key="2">
    <citation type="journal article" date="2001" name="Proc. Natl. Acad. Sci. U.S.A.">
        <title>A family of tissue-specific resistin-like molecules.</title>
        <authorList>
            <person name="Steppan C.M."/>
            <person name="Brown E.J."/>
            <person name="Wright C.M."/>
            <person name="Bhat S."/>
            <person name="Banerjee R.R."/>
            <person name="Dai C.Y."/>
            <person name="Enders G.H."/>
            <person name="Silberg D.G."/>
            <person name="Wen X."/>
            <person name="Wu G.D."/>
            <person name="Lazar M.A."/>
        </authorList>
    </citation>
    <scope>NUCLEOTIDE SEQUENCE [MRNA]</scope>
</reference>
<reference key="3">
    <citation type="submission" date="2000-07" db="EMBL/GenBank/DDBJ databases">
        <title>Identification of a novel cysteine-rich secreted A12-alpha related protein.</title>
        <authorList>
            <person name="Rajala M.W."/>
            <person name="Scherer P.E."/>
        </authorList>
    </citation>
    <scope>NUCLEOTIDE SEQUENCE [MRNA]</scope>
</reference>
<reference key="4">
    <citation type="journal article" date="2002" name="In Vivo">
        <title>Bioinformatics based discovery of a novel factor with apparent specificity to colon cancer.</title>
        <authorList>
            <person name="De Young M.P."/>
            <person name="Damania H."/>
            <person name="Scheurle D."/>
            <person name="Zylberberg C."/>
            <person name="Narayanan R."/>
        </authorList>
    </citation>
    <scope>NUCLEOTIDE SEQUENCE [MRNA]</scope>
    <source>
        <tissue>Small intestine</tissue>
    </source>
</reference>
<reference key="5">
    <citation type="journal article" date="2003" name="Genome Res.">
        <title>The secreted protein discovery initiative (SPDI), a large-scale effort to identify novel human secreted and transmembrane proteins: a bioinformatics assessment.</title>
        <authorList>
            <person name="Clark H.F."/>
            <person name="Gurney A.L."/>
            <person name="Abaya E."/>
            <person name="Baker K."/>
            <person name="Baldwin D.T."/>
            <person name="Brush J."/>
            <person name="Chen J."/>
            <person name="Chow B."/>
            <person name="Chui C."/>
            <person name="Crowley C."/>
            <person name="Currell B."/>
            <person name="Deuel B."/>
            <person name="Dowd P."/>
            <person name="Eaton D."/>
            <person name="Foster J.S."/>
            <person name="Grimaldi C."/>
            <person name="Gu Q."/>
            <person name="Hass P.E."/>
            <person name="Heldens S."/>
            <person name="Huang A."/>
            <person name="Kim H.S."/>
            <person name="Klimowski L."/>
            <person name="Jin Y."/>
            <person name="Johnson S."/>
            <person name="Lee J."/>
            <person name="Lewis L."/>
            <person name="Liao D."/>
            <person name="Mark M.R."/>
            <person name="Robbie E."/>
            <person name="Sanchez C."/>
            <person name="Schoenfeld J."/>
            <person name="Seshagiri S."/>
            <person name="Simmons L."/>
            <person name="Singh J."/>
            <person name="Smith V."/>
            <person name="Stinson J."/>
            <person name="Vagts A."/>
            <person name="Vandlen R.L."/>
            <person name="Watanabe C."/>
            <person name="Wieand D."/>
            <person name="Woods K."/>
            <person name="Xie M.-H."/>
            <person name="Yansura D.G."/>
            <person name="Yi S."/>
            <person name="Yu G."/>
            <person name="Yuan J."/>
            <person name="Zhang M."/>
            <person name="Zhang Z."/>
            <person name="Goddard A.D."/>
            <person name="Wood W.I."/>
            <person name="Godowski P.J."/>
            <person name="Gray A.M."/>
        </authorList>
    </citation>
    <scope>NUCLEOTIDE SEQUENCE [LARGE SCALE MRNA]</scope>
</reference>
<reference key="6">
    <citation type="journal article" date="2004" name="Genome Res.">
        <title>The status, quality, and expansion of the NIH full-length cDNA project: the Mammalian Gene Collection (MGC).</title>
        <authorList>
            <consortium name="The MGC Project Team"/>
        </authorList>
    </citation>
    <scope>NUCLEOTIDE SEQUENCE [LARGE SCALE MRNA]</scope>
</reference>
<sequence>MGPSSCLLLILIPLLQLINPGSTQCSLDSVMDKKIKDVLNSLEYSPSPISKKLSCASVKSQGRPSSCPAGMAVTGCACGYGCGSWDVQLETTCHCQCSVVDWTTARCCHLT</sequence>
<comment type="function">
    <text>Probable hormone.</text>
</comment>
<comment type="subunit">
    <text evidence="1">Homodimer; disulfide-linked.</text>
</comment>
<comment type="subcellular location">
    <subcellularLocation>
        <location>Secreted</location>
    </subcellularLocation>
</comment>
<comment type="tissue specificity">
    <text>Expressed only in the gastrointestinal tract, particularly the colon.</text>
</comment>
<comment type="similarity">
    <text evidence="3">Belongs to the resistin/FIZZ family.</text>
</comment>